<proteinExistence type="inferred from homology"/>
<keyword id="KW-0004">4Fe-4S</keyword>
<keyword id="KW-0148">Chlorophyll</keyword>
<keyword id="KW-0150">Chloroplast</keyword>
<keyword id="KW-0157">Chromophore</keyword>
<keyword id="KW-0249">Electron transport</keyword>
<keyword id="KW-0408">Iron</keyword>
<keyword id="KW-0411">Iron-sulfur</keyword>
<keyword id="KW-0460">Magnesium</keyword>
<keyword id="KW-0472">Membrane</keyword>
<keyword id="KW-0479">Metal-binding</keyword>
<keyword id="KW-0560">Oxidoreductase</keyword>
<keyword id="KW-0602">Photosynthesis</keyword>
<keyword id="KW-0603">Photosystem I</keyword>
<keyword id="KW-0934">Plastid</keyword>
<keyword id="KW-0793">Thylakoid</keyword>
<keyword id="KW-0812">Transmembrane</keyword>
<keyword id="KW-1133">Transmembrane helix</keyword>
<keyword id="KW-0813">Transport</keyword>
<organism>
    <name type="scientific">Chlorokybus atmophyticus</name>
    <name type="common">Soil alga</name>
    <dbReference type="NCBI Taxonomy" id="3144"/>
    <lineage>
        <taxon>Eukaryota</taxon>
        <taxon>Viridiplantae</taxon>
        <taxon>Streptophyta</taxon>
        <taxon>Chlorokybophyceae</taxon>
        <taxon>Chlorokybales</taxon>
        <taxon>Chlorokybaceae</taxon>
        <taxon>Chlorokybus</taxon>
    </lineage>
</organism>
<feature type="chain" id="PRO_0000300039" description="Photosystem I P700 chlorophyll a apoprotein A2">
    <location>
        <begin position="1"/>
        <end position="734"/>
    </location>
</feature>
<feature type="transmembrane region" description="Helical; Name=I" evidence="1">
    <location>
        <begin position="46"/>
        <end position="69"/>
    </location>
</feature>
<feature type="transmembrane region" description="Helical; Name=II" evidence="1">
    <location>
        <begin position="135"/>
        <end position="158"/>
    </location>
</feature>
<feature type="transmembrane region" description="Helical; Name=III" evidence="1">
    <location>
        <begin position="175"/>
        <end position="199"/>
    </location>
</feature>
<feature type="transmembrane region" description="Helical; Name=IV" evidence="1">
    <location>
        <begin position="273"/>
        <end position="291"/>
    </location>
</feature>
<feature type="transmembrane region" description="Helical; Name=V" evidence="1">
    <location>
        <begin position="330"/>
        <end position="353"/>
    </location>
</feature>
<feature type="transmembrane region" description="Helical; Name=VI" evidence="1">
    <location>
        <begin position="369"/>
        <end position="395"/>
    </location>
</feature>
<feature type="transmembrane region" description="Helical; Name=VII" evidence="1">
    <location>
        <begin position="417"/>
        <end position="439"/>
    </location>
</feature>
<feature type="transmembrane region" description="Helical; Name=VIII" evidence="1">
    <location>
        <begin position="517"/>
        <end position="535"/>
    </location>
</feature>
<feature type="transmembrane region" description="Helical; Name=IX" evidence="1">
    <location>
        <begin position="575"/>
        <end position="596"/>
    </location>
</feature>
<feature type="transmembrane region" description="Helical; Name=X" evidence="1">
    <location>
        <begin position="643"/>
        <end position="665"/>
    </location>
</feature>
<feature type="transmembrane region" description="Helical; Name=XI" evidence="1">
    <location>
        <begin position="707"/>
        <end position="727"/>
    </location>
</feature>
<feature type="binding site" evidence="1">
    <location>
        <position position="559"/>
    </location>
    <ligand>
        <name>[4Fe-4S] cluster</name>
        <dbReference type="ChEBI" id="CHEBI:49883"/>
        <note>ligand shared between dimeric partners</note>
    </ligand>
</feature>
<feature type="binding site" evidence="1">
    <location>
        <position position="568"/>
    </location>
    <ligand>
        <name>[4Fe-4S] cluster</name>
        <dbReference type="ChEBI" id="CHEBI:49883"/>
        <note>ligand shared between dimeric partners</note>
    </ligand>
</feature>
<feature type="binding site" description="axial binding residue" evidence="1">
    <location>
        <position position="654"/>
    </location>
    <ligand>
        <name>chlorophyll a</name>
        <dbReference type="ChEBI" id="CHEBI:58416"/>
        <label>B1</label>
    </ligand>
    <ligandPart>
        <name>Mg</name>
        <dbReference type="ChEBI" id="CHEBI:25107"/>
    </ligandPart>
</feature>
<feature type="binding site" description="axial binding residue" evidence="1">
    <location>
        <position position="662"/>
    </location>
    <ligand>
        <name>chlorophyll a</name>
        <dbReference type="ChEBI" id="CHEBI:58416"/>
        <label>B3</label>
    </ligand>
    <ligandPart>
        <name>Mg</name>
        <dbReference type="ChEBI" id="CHEBI:25107"/>
    </ligandPart>
</feature>
<feature type="binding site" evidence="1">
    <location>
        <position position="670"/>
    </location>
    <ligand>
        <name>chlorophyll a</name>
        <dbReference type="ChEBI" id="CHEBI:58416"/>
        <label>B3</label>
    </ligand>
</feature>
<feature type="binding site" evidence="1">
    <location>
        <position position="671"/>
    </location>
    <ligand>
        <name>phylloquinone</name>
        <dbReference type="ChEBI" id="CHEBI:18067"/>
        <label>B</label>
    </ligand>
</feature>
<accession>Q19V90</accession>
<protein>
    <recommendedName>
        <fullName evidence="1">Photosystem I P700 chlorophyll a apoprotein A2</fullName>
        <ecNumber evidence="1">1.97.1.12</ecNumber>
    </recommendedName>
    <alternativeName>
        <fullName evidence="1">PSI-B</fullName>
    </alternativeName>
    <alternativeName>
        <fullName evidence="1">PsaB</fullName>
    </alternativeName>
</protein>
<dbReference type="EC" id="1.97.1.12" evidence="1"/>
<dbReference type="EMBL" id="DQ422812">
    <property type="protein sequence ID" value="ABD62206.1"/>
    <property type="molecule type" value="Genomic_DNA"/>
</dbReference>
<dbReference type="RefSeq" id="YP_001019112.1">
    <property type="nucleotide sequence ID" value="NC_008822.1"/>
</dbReference>
<dbReference type="SMR" id="Q19V90"/>
<dbReference type="GeneID" id="4783242"/>
<dbReference type="GO" id="GO:0009535">
    <property type="term" value="C:chloroplast thylakoid membrane"/>
    <property type="evidence" value="ECO:0007669"/>
    <property type="project" value="UniProtKB-SubCell"/>
</dbReference>
<dbReference type="GO" id="GO:0009522">
    <property type="term" value="C:photosystem I"/>
    <property type="evidence" value="ECO:0007669"/>
    <property type="project" value="UniProtKB-KW"/>
</dbReference>
<dbReference type="GO" id="GO:0051539">
    <property type="term" value="F:4 iron, 4 sulfur cluster binding"/>
    <property type="evidence" value="ECO:0007669"/>
    <property type="project" value="UniProtKB-KW"/>
</dbReference>
<dbReference type="GO" id="GO:0016168">
    <property type="term" value="F:chlorophyll binding"/>
    <property type="evidence" value="ECO:0007669"/>
    <property type="project" value="UniProtKB-KW"/>
</dbReference>
<dbReference type="GO" id="GO:0009055">
    <property type="term" value="F:electron transfer activity"/>
    <property type="evidence" value="ECO:0007669"/>
    <property type="project" value="UniProtKB-UniRule"/>
</dbReference>
<dbReference type="GO" id="GO:0000287">
    <property type="term" value="F:magnesium ion binding"/>
    <property type="evidence" value="ECO:0007669"/>
    <property type="project" value="UniProtKB-UniRule"/>
</dbReference>
<dbReference type="GO" id="GO:0016491">
    <property type="term" value="F:oxidoreductase activity"/>
    <property type="evidence" value="ECO:0007669"/>
    <property type="project" value="UniProtKB-KW"/>
</dbReference>
<dbReference type="GO" id="GO:0015979">
    <property type="term" value="P:photosynthesis"/>
    <property type="evidence" value="ECO:0007669"/>
    <property type="project" value="UniProtKB-UniRule"/>
</dbReference>
<dbReference type="FunFam" id="1.20.1130.10:FF:000001">
    <property type="entry name" value="Photosystem I P700 chlorophyll a apoprotein A2"/>
    <property type="match status" value="1"/>
</dbReference>
<dbReference type="Gene3D" id="1.20.1130.10">
    <property type="entry name" value="Photosystem I PsaA/PsaB"/>
    <property type="match status" value="1"/>
</dbReference>
<dbReference type="HAMAP" id="MF_00482">
    <property type="entry name" value="PSI_PsaB"/>
    <property type="match status" value="1"/>
</dbReference>
<dbReference type="InterPro" id="IPR001280">
    <property type="entry name" value="PSI_PsaA/B"/>
</dbReference>
<dbReference type="InterPro" id="IPR020586">
    <property type="entry name" value="PSI_PsaA/B_CS"/>
</dbReference>
<dbReference type="InterPro" id="IPR036408">
    <property type="entry name" value="PSI_PsaA/B_sf"/>
</dbReference>
<dbReference type="InterPro" id="IPR006244">
    <property type="entry name" value="PSI_PsaB"/>
</dbReference>
<dbReference type="NCBIfam" id="TIGR01336">
    <property type="entry name" value="psaB"/>
    <property type="match status" value="1"/>
</dbReference>
<dbReference type="PANTHER" id="PTHR30128">
    <property type="entry name" value="OUTER MEMBRANE PROTEIN, OMPA-RELATED"/>
    <property type="match status" value="1"/>
</dbReference>
<dbReference type="PANTHER" id="PTHR30128:SF19">
    <property type="entry name" value="PHOTOSYSTEM I P700 CHLOROPHYLL A APOPROTEIN A1-RELATED"/>
    <property type="match status" value="1"/>
</dbReference>
<dbReference type="Pfam" id="PF00223">
    <property type="entry name" value="PsaA_PsaB"/>
    <property type="match status" value="1"/>
</dbReference>
<dbReference type="PIRSF" id="PIRSF002905">
    <property type="entry name" value="PSI_A"/>
    <property type="match status" value="1"/>
</dbReference>
<dbReference type="PRINTS" id="PR00257">
    <property type="entry name" value="PHOTSYSPSAAB"/>
</dbReference>
<dbReference type="SUPFAM" id="SSF81558">
    <property type="entry name" value="Photosystem I subunits PsaA/PsaB"/>
    <property type="match status" value="1"/>
</dbReference>
<dbReference type="PROSITE" id="PS00419">
    <property type="entry name" value="PHOTOSYSTEM_I_PSAAB"/>
    <property type="match status" value="1"/>
</dbReference>
<geneLocation type="chloroplast"/>
<reference key="1">
    <citation type="journal article" date="2007" name="BMC Biol.">
        <title>A clade uniting the green algae Mesostigma viride and Chlorokybus atmophyticus represents the deepest branch of the Streptophyta in chloroplast genome-based phylogenies.</title>
        <authorList>
            <person name="Lemieux C."/>
            <person name="Otis C."/>
            <person name="Turmel M."/>
        </authorList>
    </citation>
    <scope>NUCLEOTIDE SEQUENCE [LARGE SCALE GENOMIC DNA]</scope>
    <source>
        <strain>SAG 48.80</strain>
    </source>
</reference>
<sequence length="734" mass="81778">MATKFPKFSQGLAQDPTTRRIWFGIATAHDFESHDGITEESLYQKIFASHFGQLAIIFLWTSGNLFHVAWQGNFEQWTKDPLHVRPIAHAIWDPHFGQPAVEAFTRGGASNPVNIAYSGVYQWWYTIGLRTNNDLYTGALFLLIVSAVALFAGWLHLQPKFQPSLSWFKNAESRLNHHLSGLFGVSSLAWTGHLVHVAIPESRGQHVGWDNFLSVLPHPQGLGPFFTGSWGVYAQNPDSTSHLFNTSEGAGTAILTFLGGFHPQTQSLWLTDIAHHHLAIAVLFIIAGHMYRTNFGIGHSMKEILDSHVPPAGGLGAGHKGLYDTVNNSLHFQLGLALASLGVVTSLVAQHMYSLPPYAFLAQDFTTQAALYTHHQYIAGFIMTGAFAHGAIFFVRDYDPELNKDNVLARMLEHKEAIISHLSWASLFLGFHTLGLYVHNDVMQAFGTPEKQILIEPVFAQWIQSAHGKALYGFDVLLSSANSPASSASQSIWLPGWLDAINNNTNSLFLTIGPGDFLVHHAIALGLHTTTLILVKGALDARGSKLMPDKKDFGYAFPCDGPGRGGTCDISAWDAFYLAVFWMLNTIGWVTFYWHWKHLTLWQGNVAQFNESSTYLMGWLRDYLWLNSSQLINGYNPFGMNSLSVWAWMFLFGHLVWATGFMFLISWRGYWQELIETLAWAHERTPLANLVRWKDKPVALSIVQARLVGLAHFSVGYVLTYAAFLIASTSGKFG</sequence>
<name>PSAB_CHLAT</name>
<evidence type="ECO:0000255" key="1">
    <source>
        <dbReference type="HAMAP-Rule" id="MF_00482"/>
    </source>
</evidence>
<gene>
    <name evidence="1" type="primary">psaB</name>
</gene>
<comment type="function">
    <text evidence="1">PsaA and PsaB bind P700, the primary electron donor of photosystem I (PSI), as well as the electron acceptors A0, A1 and FX. PSI is a plastocyanin-ferredoxin oxidoreductase, converting photonic excitation into a charge separation, which transfers an electron from the donor P700 chlorophyll pair to the spectroscopically characterized acceptors A0, A1, FX, FA and FB in turn. Oxidized P700 is reduced on the lumenal side of the thylakoid membrane by plastocyanin.</text>
</comment>
<comment type="catalytic activity">
    <reaction evidence="1">
        <text>reduced [plastocyanin] + hnu + oxidized [2Fe-2S]-[ferredoxin] = oxidized [plastocyanin] + reduced [2Fe-2S]-[ferredoxin]</text>
        <dbReference type="Rhea" id="RHEA:30407"/>
        <dbReference type="Rhea" id="RHEA-COMP:10000"/>
        <dbReference type="Rhea" id="RHEA-COMP:10001"/>
        <dbReference type="Rhea" id="RHEA-COMP:10039"/>
        <dbReference type="Rhea" id="RHEA-COMP:10040"/>
        <dbReference type="ChEBI" id="CHEBI:29036"/>
        <dbReference type="ChEBI" id="CHEBI:30212"/>
        <dbReference type="ChEBI" id="CHEBI:33737"/>
        <dbReference type="ChEBI" id="CHEBI:33738"/>
        <dbReference type="ChEBI" id="CHEBI:49552"/>
        <dbReference type="EC" id="1.97.1.12"/>
    </reaction>
</comment>
<comment type="cofactor">
    <text evidence="1">P700 is a chlorophyll a/chlorophyll a' dimer, A0 is one or more chlorophyll a, A1 is one or both phylloquinones and FX is a shared 4Fe-4S iron-sulfur center.</text>
</comment>
<comment type="subunit">
    <text evidence="1">The PsaA/B heterodimer binds the P700 chlorophyll special pair and subsequent electron acceptors. PSI consists of a core antenna complex that captures photons, and an electron transfer chain that converts photonic excitation into a charge separation. The eukaryotic PSI reaction center is composed of at least 11 subunits.</text>
</comment>
<comment type="subcellular location">
    <subcellularLocation>
        <location evidence="1">Plastid</location>
        <location evidence="1">Chloroplast thylakoid membrane</location>
        <topology evidence="1">Multi-pass membrane protein</topology>
    </subcellularLocation>
</comment>
<comment type="similarity">
    <text evidence="1">Belongs to the PsaA/PsaB family.</text>
</comment>